<protein>
    <recommendedName>
        <fullName evidence="1">Ribosomal RNA small subunit methyltransferase H</fullName>
        <ecNumber evidence="1">2.1.1.199</ecNumber>
    </recommendedName>
    <alternativeName>
        <fullName evidence="1">16S rRNA m(4)C1402 methyltransferase</fullName>
    </alternativeName>
    <alternativeName>
        <fullName evidence="1">rRNA (cytosine-N(4)-)-methyltransferase RsmH</fullName>
    </alternativeName>
</protein>
<feature type="chain" id="PRO_0000108719" description="Ribosomal RNA small subunit methyltransferase H">
    <location>
        <begin position="1"/>
        <end position="316"/>
    </location>
</feature>
<feature type="binding site" evidence="1">
    <location>
        <begin position="35"/>
        <end position="37"/>
    </location>
    <ligand>
        <name>S-adenosyl-L-methionine</name>
        <dbReference type="ChEBI" id="CHEBI:59789"/>
    </ligand>
</feature>
<feature type="binding site" evidence="1">
    <location>
        <position position="55"/>
    </location>
    <ligand>
        <name>S-adenosyl-L-methionine</name>
        <dbReference type="ChEBI" id="CHEBI:59789"/>
    </ligand>
</feature>
<feature type="binding site" evidence="1">
    <location>
        <position position="84"/>
    </location>
    <ligand>
        <name>S-adenosyl-L-methionine</name>
        <dbReference type="ChEBI" id="CHEBI:59789"/>
    </ligand>
</feature>
<feature type="binding site" evidence="1">
    <location>
        <position position="105"/>
    </location>
    <ligand>
        <name>S-adenosyl-L-methionine</name>
        <dbReference type="ChEBI" id="CHEBI:59789"/>
    </ligand>
</feature>
<feature type="binding site" evidence="1">
    <location>
        <position position="112"/>
    </location>
    <ligand>
        <name>S-adenosyl-L-methionine</name>
        <dbReference type="ChEBI" id="CHEBI:59789"/>
    </ligand>
</feature>
<feature type="sequence conflict" description="In Ref. 1; CAB01927." evidence="2" ref="1">
    <original>D</original>
    <variation>E</variation>
    <location>
        <position position="24"/>
    </location>
</feature>
<feature type="sequence conflict" description="In Ref. 1; CAB01927." evidence="2" ref="1">
    <original>C</original>
    <variation>R</variation>
    <location>
        <position position="90"/>
    </location>
</feature>
<feature type="sequence conflict" description="In Ref. 1; CAB01927." evidence="2" ref="1">
    <original>N</original>
    <variation>H</variation>
    <location>
        <position position="146"/>
    </location>
</feature>
<name>RSMH_STRPN</name>
<organism>
    <name type="scientific">Streptococcus pneumoniae serotype 4 (strain ATCC BAA-334 / TIGR4)</name>
    <dbReference type="NCBI Taxonomy" id="170187"/>
    <lineage>
        <taxon>Bacteria</taxon>
        <taxon>Bacillati</taxon>
        <taxon>Bacillota</taxon>
        <taxon>Bacilli</taxon>
        <taxon>Lactobacillales</taxon>
        <taxon>Streptococcaceae</taxon>
        <taxon>Streptococcus</taxon>
    </lineage>
</organism>
<sequence length="316" mass="35975">MTKEFHHVTVLLHETIDMLDVKPDGIYVDATLGGAGHSEYLLSKLSEKGHLYAFDQDQNAIDNAQKRLAPYIEKGMVTFIKDNFRHLQACLREAGVQEIDGICYDLGVSSPQLDQRERGFSYKKDAPLDMRMNQDASLTAYEVVNNYDYHDLVRIFFKYGEDKFSKQIARKIEQAREVKPIETTTELAEIIKLVKPAKELKKKGHPAKQIFQAIRIEVNDELGAADESIQQAMDMLALDGRISVITFHSLEDRLTKQLFKEASTVEVPKGLPFIPDDLKPKMELVSRKPILPSAEELEANNRSHSAKLRVVRKIHK</sequence>
<accession>P0CB58</accession>
<accession>P72491</accession>
<accession>Q97SK1</accession>
<accession>Q9R8Q8</accession>
<reference key="1">
    <citation type="submission" date="1996-08" db="EMBL/GenBank/DDBJ databases">
        <title>Sequence of a genetic region of Streptococcus pneumoniae similar to the dcw region in Escherichia coli, Bacillus subtilis and Haemophilus influenzae.</title>
        <authorList>
            <person name="Palmen R."/>
            <person name="Mallet O."/>
            <person name="Berroy P.J.M."/>
            <person name="Trombe M.C."/>
        </authorList>
    </citation>
    <scope>NUCLEOTIDE SEQUENCE [GENOMIC DNA]</scope>
    <source>
        <strain>Cp5500</strain>
    </source>
</reference>
<reference key="2">
    <citation type="journal article" date="2001" name="Science">
        <title>Complete genome sequence of a virulent isolate of Streptococcus pneumoniae.</title>
        <authorList>
            <person name="Tettelin H."/>
            <person name="Nelson K.E."/>
            <person name="Paulsen I.T."/>
            <person name="Eisen J.A."/>
            <person name="Read T.D."/>
            <person name="Peterson S.N."/>
            <person name="Heidelberg J.F."/>
            <person name="DeBoy R.T."/>
            <person name="Haft D.H."/>
            <person name="Dodson R.J."/>
            <person name="Durkin A.S."/>
            <person name="Gwinn M.L."/>
            <person name="Kolonay J.F."/>
            <person name="Nelson W.C."/>
            <person name="Peterson J.D."/>
            <person name="Umayam L.A."/>
            <person name="White O."/>
            <person name="Salzberg S.L."/>
            <person name="Lewis M.R."/>
            <person name="Radune D."/>
            <person name="Holtzapple E.K."/>
            <person name="Khouri H.M."/>
            <person name="Wolf A.M."/>
            <person name="Utterback T.R."/>
            <person name="Hansen C.L."/>
            <person name="McDonald L.A."/>
            <person name="Feldblyum T.V."/>
            <person name="Angiuoli S.V."/>
            <person name="Dickinson T."/>
            <person name="Hickey E.K."/>
            <person name="Holt I.E."/>
            <person name="Loftus B.J."/>
            <person name="Yang F."/>
            <person name="Smith H.O."/>
            <person name="Venter J.C."/>
            <person name="Dougherty B.A."/>
            <person name="Morrison D.A."/>
            <person name="Hollingshead S.K."/>
            <person name="Fraser C.M."/>
        </authorList>
    </citation>
    <scope>NUCLEOTIDE SEQUENCE [LARGE SCALE GENOMIC DNA]</scope>
    <source>
        <strain>ATCC BAA-334 / TIGR4</strain>
    </source>
</reference>
<comment type="function">
    <text evidence="1">Specifically methylates the N4 position of cytidine in position 1402 (C1402) of 16S rRNA.</text>
</comment>
<comment type="catalytic activity">
    <reaction evidence="1">
        <text>cytidine(1402) in 16S rRNA + S-adenosyl-L-methionine = N(4)-methylcytidine(1402) in 16S rRNA + S-adenosyl-L-homocysteine + H(+)</text>
        <dbReference type="Rhea" id="RHEA:42928"/>
        <dbReference type="Rhea" id="RHEA-COMP:10286"/>
        <dbReference type="Rhea" id="RHEA-COMP:10287"/>
        <dbReference type="ChEBI" id="CHEBI:15378"/>
        <dbReference type="ChEBI" id="CHEBI:57856"/>
        <dbReference type="ChEBI" id="CHEBI:59789"/>
        <dbReference type="ChEBI" id="CHEBI:74506"/>
        <dbReference type="ChEBI" id="CHEBI:82748"/>
        <dbReference type="EC" id="2.1.1.199"/>
    </reaction>
</comment>
<comment type="subcellular location">
    <subcellularLocation>
        <location evidence="1">Cytoplasm</location>
    </subcellularLocation>
</comment>
<comment type="similarity">
    <text evidence="1">Belongs to the methyltransferase superfamily. RsmH family.</text>
</comment>
<dbReference type="EC" id="2.1.1.199" evidence="1"/>
<dbReference type="EMBL" id="Z79691">
    <property type="protein sequence ID" value="CAB01927.1"/>
    <property type="molecule type" value="Genomic_DNA"/>
</dbReference>
<dbReference type="EMBL" id="AE005672">
    <property type="protein sequence ID" value="AAK74509.1"/>
    <property type="molecule type" value="Genomic_DNA"/>
</dbReference>
<dbReference type="PIR" id="D95039">
    <property type="entry name" value="D95039"/>
</dbReference>
<dbReference type="PIR" id="F97909">
    <property type="entry name" value="F97909"/>
</dbReference>
<dbReference type="RefSeq" id="WP_000159382.1">
    <property type="nucleotide sequence ID" value="NC_003028.3"/>
</dbReference>
<dbReference type="SMR" id="P0CB58"/>
<dbReference type="PaxDb" id="170187-SP_0334"/>
<dbReference type="EnsemblBacteria" id="AAK74509">
    <property type="protein sequence ID" value="AAK74509"/>
    <property type="gene ID" value="SP_0334"/>
</dbReference>
<dbReference type="KEGG" id="spn:SP_0334"/>
<dbReference type="eggNOG" id="COG0275">
    <property type="taxonomic scope" value="Bacteria"/>
</dbReference>
<dbReference type="PhylomeDB" id="P0CB58"/>
<dbReference type="BioCyc" id="SPNE170187:G1FZB-343-MONOMER"/>
<dbReference type="Proteomes" id="UP000000585">
    <property type="component" value="Chromosome"/>
</dbReference>
<dbReference type="GO" id="GO:0005737">
    <property type="term" value="C:cytoplasm"/>
    <property type="evidence" value="ECO:0007669"/>
    <property type="project" value="UniProtKB-SubCell"/>
</dbReference>
<dbReference type="GO" id="GO:0071424">
    <property type="term" value="F:rRNA (cytosine-N4-)-methyltransferase activity"/>
    <property type="evidence" value="ECO:0007669"/>
    <property type="project" value="UniProtKB-UniRule"/>
</dbReference>
<dbReference type="GO" id="GO:0070475">
    <property type="term" value="P:rRNA base methylation"/>
    <property type="evidence" value="ECO:0007669"/>
    <property type="project" value="UniProtKB-UniRule"/>
</dbReference>
<dbReference type="FunFam" id="1.10.150.170:FF:000001">
    <property type="entry name" value="Ribosomal RNA small subunit methyltransferase H"/>
    <property type="match status" value="1"/>
</dbReference>
<dbReference type="Gene3D" id="1.10.150.170">
    <property type="entry name" value="Putative methyltransferase TM0872, insert domain"/>
    <property type="match status" value="1"/>
</dbReference>
<dbReference type="Gene3D" id="3.40.50.150">
    <property type="entry name" value="Vaccinia Virus protein VP39"/>
    <property type="match status" value="1"/>
</dbReference>
<dbReference type="HAMAP" id="MF_01007">
    <property type="entry name" value="16SrRNA_methyltr_H"/>
    <property type="match status" value="1"/>
</dbReference>
<dbReference type="InterPro" id="IPR002903">
    <property type="entry name" value="RsmH"/>
</dbReference>
<dbReference type="InterPro" id="IPR023397">
    <property type="entry name" value="SAM-dep_MeTrfase_MraW_recog"/>
</dbReference>
<dbReference type="InterPro" id="IPR029063">
    <property type="entry name" value="SAM-dependent_MTases_sf"/>
</dbReference>
<dbReference type="NCBIfam" id="TIGR00006">
    <property type="entry name" value="16S rRNA (cytosine(1402)-N(4))-methyltransferase RsmH"/>
    <property type="match status" value="1"/>
</dbReference>
<dbReference type="PANTHER" id="PTHR11265:SF0">
    <property type="entry name" value="12S RRNA N4-METHYLCYTIDINE METHYLTRANSFERASE"/>
    <property type="match status" value="1"/>
</dbReference>
<dbReference type="PANTHER" id="PTHR11265">
    <property type="entry name" value="S-ADENOSYL-METHYLTRANSFERASE MRAW"/>
    <property type="match status" value="1"/>
</dbReference>
<dbReference type="Pfam" id="PF01795">
    <property type="entry name" value="Methyltransf_5"/>
    <property type="match status" value="1"/>
</dbReference>
<dbReference type="PIRSF" id="PIRSF004486">
    <property type="entry name" value="MraW"/>
    <property type="match status" value="1"/>
</dbReference>
<dbReference type="SUPFAM" id="SSF81799">
    <property type="entry name" value="Putative methyltransferase TM0872, insert domain"/>
    <property type="match status" value="1"/>
</dbReference>
<dbReference type="SUPFAM" id="SSF53335">
    <property type="entry name" value="S-adenosyl-L-methionine-dependent methyltransferases"/>
    <property type="match status" value="1"/>
</dbReference>
<keyword id="KW-0963">Cytoplasm</keyword>
<keyword id="KW-0489">Methyltransferase</keyword>
<keyword id="KW-1185">Reference proteome</keyword>
<keyword id="KW-0698">rRNA processing</keyword>
<keyword id="KW-0949">S-adenosyl-L-methionine</keyword>
<keyword id="KW-0808">Transferase</keyword>
<evidence type="ECO:0000255" key="1">
    <source>
        <dbReference type="HAMAP-Rule" id="MF_01007"/>
    </source>
</evidence>
<evidence type="ECO:0000305" key="2"/>
<gene>
    <name evidence="1" type="primary">rsmH</name>
    <name type="synonym">mraW</name>
    <name type="ordered locus">SP_0334</name>
</gene>
<proteinExistence type="inferred from homology"/>